<accession>Q867X2</accession>
<accession>Q867X1</accession>
<accession>Q867X4</accession>
<gene>
    <name type="primary">ACE-1</name>
</gene>
<keyword id="KW-1003">Cell membrane</keyword>
<keyword id="KW-1015">Disulfide bond</keyword>
<keyword id="KW-0325">Glycoprotein</keyword>
<keyword id="KW-0378">Hydrolase</keyword>
<keyword id="KW-0472">Membrane</keyword>
<keyword id="KW-0531">Neurotransmitter degradation</keyword>
<keyword id="KW-1185">Reference proteome</keyword>
<keyword id="KW-0964">Secreted</keyword>
<keyword id="KW-0719">Serine esterase</keyword>
<keyword id="KW-0770">Synapse</keyword>
<dbReference type="EC" id="3.1.1.7"/>
<dbReference type="EMBL" id="AJ512689">
    <property type="protein sequence ID" value="CAD54761.1"/>
    <property type="molecule type" value="Genomic_DNA"/>
</dbReference>
<dbReference type="EMBL" id="AJ512691">
    <property type="protein sequence ID" value="CAD54763.1"/>
    <property type="molecule type" value="Genomic_DNA"/>
</dbReference>
<dbReference type="EMBL" id="AJ512692">
    <property type="protein sequence ID" value="CAD54764.1"/>
    <property type="molecule type" value="Genomic_DNA"/>
</dbReference>
<dbReference type="EMBL" id="AJ512693">
    <property type="protein sequence ID" value="CAD54765.1"/>
    <property type="molecule type" value="Genomic_DNA"/>
</dbReference>
<dbReference type="EMBL" id="AJ512694">
    <property type="protein sequence ID" value="CAD54766.1"/>
    <property type="molecule type" value="Genomic_DNA"/>
</dbReference>
<dbReference type="EMBL" id="AJ512697">
    <property type="protein sequence ID" value="CAD54769.1"/>
    <property type="molecule type" value="Genomic_DNA"/>
</dbReference>
<dbReference type="EMBL" id="AJ512698">
    <property type="protein sequence ID" value="CAD54770.1"/>
    <property type="molecule type" value="Genomic_DNA"/>
</dbReference>
<dbReference type="EMBL" id="AJ512700">
    <property type="protein sequence ID" value="CAD54772.1"/>
    <property type="molecule type" value="Genomic_DNA"/>
</dbReference>
<dbReference type="EMBL" id="AJ512703">
    <property type="protein sequence ID" value="CAD54775.1"/>
    <property type="molecule type" value="Genomic_DNA"/>
</dbReference>
<dbReference type="EMBL" id="AJ512704">
    <property type="protein sequence ID" value="CAD54776.1"/>
    <property type="molecule type" value="Genomic_DNA"/>
</dbReference>
<dbReference type="EMBL" id="AJ512705">
    <property type="protein sequence ID" value="CAD54777.1"/>
    <property type="molecule type" value="Genomic_DNA"/>
</dbReference>
<dbReference type="EMBL" id="AJ512706">
    <property type="protein sequence ID" value="CAD54778.1"/>
    <property type="molecule type" value="Genomic_DNA"/>
</dbReference>
<dbReference type="EMBL" id="AJ512707">
    <property type="protein sequence ID" value="CAD54779.1"/>
    <property type="molecule type" value="Genomic_DNA"/>
</dbReference>
<dbReference type="EMBL" id="AJ512710">
    <property type="protein sequence ID" value="CAD54782.1"/>
    <property type="molecule type" value="Genomic_DNA"/>
</dbReference>
<dbReference type="EMBL" id="AJ512711">
    <property type="protein sequence ID" value="CAD54783.1"/>
    <property type="molecule type" value="Genomic_DNA"/>
</dbReference>
<dbReference type="EMBL" id="AJ512712">
    <property type="protein sequence ID" value="CAD54784.1"/>
    <property type="molecule type" value="Genomic_DNA"/>
</dbReference>
<dbReference type="EMBL" id="AJ512713">
    <property type="protein sequence ID" value="CAD54785.1"/>
    <property type="molecule type" value="Genomic_DNA"/>
</dbReference>
<dbReference type="EMBL" id="AJ512714">
    <property type="protein sequence ID" value="CAD54786.1"/>
    <property type="molecule type" value="Genomic_DNA"/>
</dbReference>
<dbReference type="EMBL" id="AJ512715">
    <property type="protein sequence ID" value="CAD54787.1"/>
    <property type="molecule type" value="Genomic_DNA"/>
</dbReference>
<dbReference type="EMBL" id="AJ512717">
    <property type="protein sequence ID" value="CAD54789.1"/>
    <property type="molecule type" value="Genomic_DNA"/>
</dbReference>
<dbReference type="SMR" id="Q867X2"/>
<dbReference type="ESTHER" id="culpi-ACHE1">
    <property type="family name" value="ACHE"/>
</dbReference>
<dbReference type="MEROPS" id="S09.980"/>
<dbReference type="GlyCosmos" id="Q867X2">
    <property type="glycosylation" value="1 site, No reported glycans"/>
</dbReference>
<dbReference type="EnsemblMetazoa" id="CQUJHB013404.R20823">
    <property type="protein sequence ID" value="CQUJHB013404.P20823"/>
    <property type="gene ID" value="CQUJHB013404"/>
</dbReference>
<dbReference type="EnsemblMetazoa" id="XM_038261576.1">
    <property type="protein sequence ID" value="XP_038117504.1"/>
    <property type="gene ID" value="LOC6037551"/>
</dbReference>
<dbReference type="VEuPathDB" id="VectorBase:CPIJ006034"/>
<dbReference type="VEuPathDB" id="VectorBase:CQUJHB013404"/>
<dbReference type="InParanoid" id="Q867X2"/>
<dbReference type="OrthoDB" id="9000293at2759"/>
<dbReference type="Proteomes" id="UP000002320">
    <property type="component" value="Unplaced"/>
</dbReference>
<dbReference type="GO" id="GO:0005615">
    <property type="term" value="C:extracellular space"/>
    <property type="evidence" value="ECO:0007669"/>
    <property type="project" value="TreeGrafter"/>
</dbReference>
<dbReference type="GO" id="GO:0005886">
    <property type="term" value="C:plasma membrane"/>
    <property type="evidence" value="ECO:0007669"/>
    <property type="project" value="UniProtKB-SubCell"/>
</dbReference>
<dbReference type="GO" id="GO:0045202">
    <property type="term" value="C:synapse"/>
    <property type="evidence" value="ECO:0007669"/>
    <property type="project" value="UniProtKB-SubCell"/>
</dbReference>
<dbReference type="GO" id="GO:0003990">
    <property type="term" value="F:acetylcholinesterase activity"/>
    <property type="evidence" value="ECO:0007669"/>
    <property type="project" value="UniProtKB-EC"/>
</dbReference>
<dbReference type="GO" id="GO:0006581">
    <property type="term" value="P:acetylcholine catabolic process"/>
    <property type="evidence" value="ECO:0007669"/>
    <property type="project" value="TreeGrafter"/>
</dbReference>
<dbReference type="GO" id="GO:0019695">
    <property type="term" value="P:choline metabolic process"/>
    <property type="evidence" value="ECO:0007669"/>
    <property type="project" value="TreeGrafter"/>
</dbReference>
<dbReference type="Gene3D" id="3.40.50.1820">
    <property type="entry name" value="alpha/beta hydrolase"/>
    <property type="match status" value="1"/>
</dbReference>
<dbReference type="InterPro" id="IPR029058">
    <property type="entry name" value="AB_hydrolase_fold"/>
</dbReference>
<dbReference type="InterPro" id="IPR050654">
    <property type="entry name" value="AChE-related_enzymes"/>
</dbReference>
<dbReference type="InterPro" id="IPR002018">
    <property type="entry name" value="CarbesteraseB"/>
</dbReference>
<dbReference type="InterPro" id="IPR019819">
    <property type="entry name" value="Carboxylesterase_B_CS"/>
</dbReference>
<dbReference type="InterPro" id="IPR000997">
    <property type="entry name" value="Cholinesterase"/>
</dbReference>
<dbReference type="PANTHER" id="PTHR43918">
    <property type="entry name" value="ACETYLCHOLINESTERASE"/>
    <property type="match status" value="1"/>
</dbReference>
<dbReference type="PANTHER" id="PTHR43918:SF12">
    <property type="entry name" value="ACETYLCHOLINESTERASE 1"/>
    <property type="match status" value="1"/>
</dbReference>
<dbReference type="Pfam" id="PF00135">
    <property type="entry name" value="COesterase"/>
    <property type="match status" value="1"/>
</dbReference>
<dbReference type="PRINTS" id="PR00878">
    <property type="entry name" value="CHOLNESTRASE"/>
</dbReference>
<dbReference type="SUPFAM" id="SSF53474">
    <property type="entry name" value="alpha/beta-Hydrolases"/>
    <property type="match status" value="1"/>
</dbReference>
<dbReference type="PROSITE" id="PS00941">
    <property type="entry name" value="CARBOXYLESTERASE_B_2"/>
    <property type="match status" value="1"/>
</dbReference>
<organism evidence="5">
    <name type="scientific">Culex quinquefasciatus</name>
    <name type="common">Southern house mosquito</name>
    <name type="synonym">Culex pungens</name>
    <dbReference type="NCBI Taxonomy" id="7176"/>
    <lineage>
        <taxon>Eukaryota</taxon>
        <taxon>Metazoa</taxon>
        <taxon>Ecdysozoa</taxon>
        <taxon>Arthropoda</taxon>
        <taxon>Hexapoda</taxon>
        <taxon>Insecta</taxon>
        <taxon>Pterygota</taxon>
        <taxon>Neoptera</taxon>
        <taxon>Endopterygota</taxon>
        <taxon>Diptera</taxon>
        <taxon>Nematocera</taxon>
        <taxon>Culicoidea</taxon>
        <taxon>Culicidae</taxon>
        <taxon>Culicinae</taxon>
        <taxon>Culicini</taxon>
        <taxon>Culex</taxon>
        <taxon>Culex</taxon>
    </lineage>
</organism>
<comment type="function">
    <text evidence="4">Rapidly hydrolyzes choline released into the synapse.</text>
</comment>
<comment type="catalytic activity">
    <reaction evidence="3">
        <text>acetylcholine + H2O = choline + acetate + H(+)</text>
        <dbReference type="Rhea" id="RHEA:17561"/>
        <dbReference type="ChEBI" id="CHEBI:15354"/>
        <dbReference type="ChEBI" id="CHEBI:15355"/>
        <dbReference type="ChEBI" id="CHEBI:15377"/>
        <dbReference type="ChEBI" id="CHEBI:15378"/>
        <dbReference type="ChEBI" id="CHEBI:30089"/>
        <dbReference type="EC" id="3.1.1.7"/>
    </reaction>
</comment>
<comment type="subcellular location">
    <subcellularLocation>
        <location evidence="1">Synapse</location>
    </subcellularLocation>
    <subcellularLocation>
        <location evidence="1">Secreted</location>
    </subcellularLocation>
    <subcellularLocation>
        <location evidence="1">Cell membrane</location>
        <topology evidence="1">Peripheral membrane protein</topology>
    </subcellularLocation>
</comment>
<comment type="polymorphism">
    <text evidence="3">A number of strains are susceptible to insecticides while others are resistant. Insensitivity to insecticides results from a loss of sensitivity of acetylcholinesterase to organophosphates and carbamates and is due to a variant at position 97.</text>
</comment>
<comment type="similarity">
    <text evidence="4">Belongs to the type-B carboxylesterase/lipase family.</text>
</comment>
<feature type="chain" id="PRO_0000070281" description="Acetylcholinesterase">
    <location>
        <begin position="1" status="less than"/>
        <end position="132" status="greater than"/>
    </location>
</feature>
<feature type="glycosylation site" description="N-linked (GlcNAc...) asparagine" evidence="2">
    <location>
        <position position="37"/>
    </location>
</feature>
<feature type="disulfide bond" evidence="1">
    <location>
        <begin position="45"/>
        <end position="72"/>
    </location>
</feature>
<feature type="sequence variant" description="In strain: BO, DJI, Harare, Martinique, Recife, Supercar, TemR and Trans; confers resistance to insecticides." evidence="3">
    <original>G</original>
    <variation>S</variation>
    <location>
        <position position="97"/>
    </location>
</feature>
<feature type="sequence variant" description="In strain: TemR and Trans." evidence="3">
    <original>A</original>
    <variation>T</variation>
    <location>
        <position position="114"/>
    </location>
</feature>
<feature type="non-terminal residue" evidence="5">
    <location>
        <position position="1"/>
    </location>
</feature>
<feature type="non-terminal residue" evidence="5">
    <location>
        <position position="132"/>
    </location>
</feature>
<sequence>SGKKVDAWMGIPYAQPPLGPLRFRHPRPAERWTGVLNATKPPNSCVQIVDTVFGDFPGATMWNPNTPLSEDCLYINVVVPRPRPKNAAVMLWIFGGGFYSGTATLDVYDHRTLASEENVIVVSLQYRVASLG</sequence>
<proteinExistence type="inferred from homology"/>
<name>ACES_CULQU</name>
<reference evidence="4" key="1">
    <citation type="journal article" date="2003" name="Nature">
        <title>Insecticide resistance in mosquito vectors.</title>
        <authorList>
            <person name="Weill M."/>
            <person name="Lutfalla G."/>
            <person name="Mogensen K."/>
            <person name="Chandre F."/>
            <person name="Berthomieu A."/>
            <person name="Berticat C."/>
            <person name="Pasteur N."/>
            <person name="Philips A."/>
            <person name="Fort P."/>
            <person name="Raymond M."/>
        </authorList>
    </citation>
    <scope>NUCLEOTIDE SEQUENCE [GENOMIC DNA]</scope>
    <source>
        <strain evidence="5">BED</strain>
        <strain evidence="6">BO</strain>
        <strain evidence="7">Bouake</strain>
        <strain evidence="8">Brazza</strain>
        <strain evidence="9">Bresil</strain>
        <strain evidence="10">BSQ</strain>
        <strain evidence="11">DJI</strain>
        <strain evidence="12">Harare</strain>
        <strain evidence="13">Ling</strain>
        <strain evidence="14">Madurai</strain>
        <strain evidence="15">Mao</strain>
        <strain evidence="16">Martinique</strain>
        <strain evidence="17">Moorea</strain>
        <strain evidence="18">ProR</strain>
        <strain evidence="19">Recife</strain>
        <strain evidence="20">Slab</strain>
        <strain evidence="21">Supercar</strain>
        <strain evidence="22">TemR</strain>
        <strain evidence="23">Thai</strain>
        <strain evidence="24">Trans</strain>
    </source>
</reference>
<evidence type="ECO:0000250" key="1"/>
<evidence type="ECO:0000255" key="2"/>
<evidence type="ECO:0000269" key="3">
    <source>
    </source>
</evidence>
<evidence type="ECO:0000305" key="4"/>
<evidence type="ECO:0000312" key="5">
    <source>
        <dbReference type="EMBL" id="CAD54761.1"/>
    </source>
</evidence>
<evidence type="ECO:0000312" key="6">
    <source>
        <dbReference type="EMBL" id="CAD54763.1"/>
    </source>
</evidence>
<evidence type="ECO:0000312" key="7">
    <source>
        <dbReference type="EMBL" id="CAD54764.1"/>
    </source>
</evidence>
<evidence type="ECO:0000312" key="8">
    <source>
        <dbReference type="EMBL" id="CAD54765.1"/>
    </source>
</evidence>
<evidence type="ECO:0000312" key="9">
    <source>
        <dbReference type="EMBL" id="CAD54766.1"/>
    </source>
</evidence>
<evidence type="ECO:0000312" key="10">
    <source>
        <dbReference type="EMBL" id="CAD54769.1"/>
    </source>
</evidence>
<evidence type="ECO:0000312" key="11">
    <source>
        <dbReference type="EMBL" id="CAD54770.1"/>
    </source>
</evidence>
<evidence type="ECO:0000312" key="12">
    <source>
        <dbReference type="EMBL" id="CAD54772.1"/>
    </source>
</evidence>
<evidence type="ECO:0000312" key="13">
    <source>
        <dbReference type="EMBL" id="CAD54775.1"/>
    </source>
</evidence>
<evidence type="ECO:0000312" key="14">
    <source>
        <dbReference type="EMBL" id="CAD54776.1"/>
    </source>
</evidence>
<evidence type="ECO:0000312" key="15">
    <source>
        <dbReference type="EMBL" id="CAD54777.1"/>
    </source>
</evidence>
<evidence type="ECO:0000312" key="16">
    <source>
        <dbReference type="EMBL" id="CAD54778.1"/>
    </source>
</evidence>
<evidence type="ECO:0000312" key="17">
    <source>
        <dbReference type="EMBL" id="CAD54779.1"/>
    </source>
</evidence>
<evidence type="ECO:0000312" key="18">
    <source>
        <dbReference type="EMBL" id="CAD54782.1"/>
    </source>
</evidence>
<evidence type="ECO:0000312" key="19">
    <source>
        <dbReference type="EMBL" id="CAD54783.1"/>
    </source>
</evidence>
<evidence type="ECO:0000312" key="20">
    <source>
        <dbReference type="EMBL" id="CAD54784.1"/>
    </source>
</evidence>
<evidence type="ECO:0000312" key="21">
    <source>
        <dbReference type="EMBL" id="CAD54785.1"/>
    </source>
</evidence>
<evidence type="ECO:0000312" key="22">
    <source>
        <dbReference type="EMBL" id="CAD54786.1"/>
    </source>
</evidence>
<evidence type="ECO:0000312" key="23">
    <source>
        <dbReference type="EMBL" id="CAD54787.1"/>
    </source>
</evidence>
<evidence type="ECO:0000312" key="24">
    <source>
        <dbReference type="EMBL" id="CAD54789.1"/>
    </source>
</evidence>
<protein>
    <recommendedName>
        <fullName>Acetylcholinesterase</fullName>
        <shortName>AChE</shortName>
        <ecNumber>3.1.1.7</ecNumber>
    </recommendedName>
</protein>